<comment type="similarity">
    <text evidence="1">Belongs to the UPF0145 family.</text>
</comment>
<name>YBJQ_SALTY</name>
<accession>P67286</accession>
<accession>Q8XGV2</accession>
<proteinExistence type="inferred from homology"/>
<gene>
    <name evidence="1" type="primary">ybjQ</name>
    <name type="ordered locus">STM0930</name>
</gene>
<dbReference type="EMBL" id="AE006468">
    <property type="protein sequence ID" value="AAL19866.1"/>
    <property type="molecule type" value="Genomic_DNA"/>
</dbReference>
<dbReference type="RefSeq" id="NP_459907.1">
    <property type="nucleotide sequence ID" value="NC_003197.2"/>
</dbReference>
<dbReference type="RefSeq" id="WP_001160725.1">
    <property type="nucleotide sequence ID" value="NC_003197.2"/>
</dbReference>
<dbReference type="SMR" id="P67286"/>
<dbReference type="STRING" id="99287.STM0930"/>
<dbReference type="PaxDb" id="99287-STM0930"/>
<dbReference type="GeneID" id="1252449"/>
<dbReference type="KEGG" id="stm:STM0930"/>
<dbReference type="PATRIC" id="fig|99287.12.peg.981"/>
<dbReference type="HOGENOM" id="CLU_117144_3_0_6"/>
<dbReference type="OMA" id="SGEAIMG"/>
<dbReference type="PhylomeDB" id="P67286"/>
<dbReference type="BioCyc" id="SENT99287:STM0930-MONOMER"/>
<dbReference type="PRO" id="PR:P67286"/>
<dbReference type="Proteomes" id="UP000001014">
    <property type="component" value="Chromosome"/>
</dbReference>
<dbReference type="Gene3D" id="3.30.110.70">
    <property type="entry name" value="Hypothetical protein apc22750. Chain B"/>
    <property type="match status" value="1"/>
</dbReference>
<dbReference type="HAMAP" id="MF_00338">
    <property type="entry name" value="UPF0145"/>
    <property type="match status" value="1"/>
</dbReference>
<dbReference type="InterPro" id="IPR035439">
    <property type="entry name" value="UPF0145_dom_sf"/>
</dbReference>
<dbReference type="InterPro" id="IPR002765">
    <property type="entry name" value="UPF0145_YbjQ-like"/>
</dbReference>
<dbReference type="NCBIfam" id="NF002776">
    <property type="entry name" value="PRK02877.1"/>
    <property type="match status" value="1"/>
</dbReference>
<dbReference type="PANTHER" id="PTHR34068">
    <property type="entry name" value="UPF0145 PROTEIN YBJQ"/>
    <property type="match status" value="1"/>
</dbReference>
<dbReference type="PANTHER" id="PTHR34068:SF1">
    <property type="entry name" value="UPF0145 PROTEIN YBJQ"/>
    <property type="match status" value="1"/>
</dbReference>
<dbReference type="Pfam" id="PF01906">
    <property type="entry name" value="YbjQ_1"/>
    <property type="match status" value="1"/>
</dbReference>
<dbReference type="SUPFAM" id="SSF117782">
    <property type="entry name" value="YbjQ-like"/>
    <property type="match status" value="1"/>
</dbReference>
<feature type="chain" id="PRO_0000138481" description="UPF0145 protein YbjQ">
    <location>
        <begin position="1"/>
        <end position="107"/>
    </location>
</feature>
<reference key="1">
    <citation type="journal article" date="2001" name="Nature">
        <title>Complete genome sequence of Salmonella enterica serovar Typhimurium LT2.</title>
        <authorList>
            <person name="McClelland M."/>
            <person name="Sanderson K.E."/>
            <person name="Spieth J."/>
            <person name="Clifton S.W."/>
            <person name="Latreille P."/>
            <person name="Courtney L."/>
            <person name="Porwollik S."/>
            <person name="Ali J."/>
            <person name="Dante M."/>
            <person name="Du F."/>
            <person name="Hou S."/>
            <person name="Layman D."/>
            <person name="Leonard S."/>
            <person name="Nguyen C."/>
            <person name="Scott K."/>
            <person name="Holmes A."/>
            <person name="Grewal N."/>
            <person name="Mulvaney E."/>
            <person name="Ryan E."/>
            <person name="Sun H."/>
            <person name="Florea L."/>
            <person name="Miller W."/>
            <person name="Stoneking T."/>
            <person name="Nhan M."/>
            <person name="Waterston R."/>
            <person name="Wilson R.K."/>
        </authorList>
    </citation>
    <scope>NUCLEOTIDE SEQUENCE [LARGE SCALE GENOMIC DNA]</scope>
    <source>
        <strain>LT2 / SGSC1412 / ATCC 700720</strain>
    </source>
</reference>
<keyword id="KW-1185">Reference proteome</keyword>
<sequence length="107" mass="11437">MQFSTTPTLEGQSIVEYCGVVTGEAILGANIFRDFFAGIRDIVGGRSGAYEKELRKAREIAFQELGEQAKALGADAVVGIDIDYETVGKDGSMLMVSVSGTAVKTRR</sequence>
<organism>
    <name type="scientific">Salmonella typhimurium (strain LT2 / SGSC1412 / ATCC 700720)</name>
    <dbReference type="NCBI Taxonomy" id="99287"/>
    <lineage>
        <taxon>Bacteria</taxon>
        <taxon>Pseudomonadati</taxon>
        <taxon>Pseudomonadota</taxon>
        <taxon>Gammaproteobacteria</taxon>
        <taxon>Enterobacterales</taxon>
        <taxon>Enterobacteriaceae</taxon>
        <taxon>Salmonella</taxon>
    </lineage>
</organism>
<evidence type="ECO:0000255" key="1">
    <source>
        <dbReference type="HAMAP-Rule" id="MF_00338"/>
    </source>
</evidence>
<protein>
    <recommendedName>
        <fullName evidence="1">UPF0145 protein YbjQ</fullName>
    </recommendedName>
</protein>